<reference key="1">
    <citation type="journal article" date="2005" name="Arch. Microbiol.">
        <title>The genome sequence of an anaerobic aromatic-degrading denitrifying bacterium, strain EbN1.</title>
        <authorList>
            <person name="Rabus R."/>
            <person name="Kube M."/>
            <person name="Heider J."/>
            <person name="Beck A."/>
            <person name="Heitmann K."/>
            <person name="Widdel F."/>
            <person name="Reinhardt R."/>
        </authorList>
    </citation>
    <scope>NUCLEOTIDE SEQUENCE [LARGE SCALE GENOMIC DNA]</scope>
    <source>
        <strain>DSM 19018 / LMG 30748 / EbN1</strain>
    </source>
</reference>
<comment type="function">
    <text evidence="1">This is one of the proteins that bind and probably mediate the attachment of the 5S RNA into the large ribosomal subunit, where it forms part of the central protuberance. In the 70S ribosome it contacts protein S13 of the 30S subunit (bridge B1b), connecting the 2 subunits; this bridge is implicated in subunit movement. Contacts the P site tRNA; the 5S rRNA and some of its associated proteins might help stabilize positioning of ribosome-bound tRNAs.</text>
</comment>
<comment type="subunit">
    <text evidence="1">Part of the 50S ribosomal subunit; part of the 5S rRNA/L5/L18/L25 subcomplex. Contacts the 5S rRNA and the P site tRNA. Forms a bridge to the 30S subunit in the 70S ribosome.</text>
</comment>
<comment type="similarity">
    <text evidence="1">Belongs to the universal ribosomal protein uL5 family.</text>
</comment>
<name>RL5_AROAE</name>
<evidence type="ECO:0000255" key="1">
    <source>
        <dbReference type="HAMAP-Rule" id="MF_01333"/>
    </source>
</evidence>
<evidence type="ECO:0000305" key="2"/>
<gene>
    <name evidence="1" type="primary">rplE</name>
    <name type="ordered locus">AZOSEA21690</name>
    <name type="ORF">ebA3839</name>
</gene>
<organism>
    <name type="scientific">Aromatoleum aromaticum (strain DSM 19018 / LMG 30748 / EbN1)</name>
    <name type="common">Azoarcus sp. (strain EbN1)</name>
    <dbReference type="NCBI Taxonomy" id="76114"/>
    <lineage>
        <taxon>Bacteria</taxon>
        <taxon>Pseudomonadati</taxon>
        <taxon>Pseudomonadota</taxon>
        <taxon>Betaproteobacteria</taxon>
        <taxon>Rhodocyclales</taxon>
        <taxon>Rhodocyclaceae</taxon>
        <taxon>Aromatoleum</taxon>
    </lineage>
</organism>
<feature type="chain" id="PRO_0000242964" description="Large ribosomal subunit protein uL5">
    <location>
        <begin position="1"/>
        <end position="179"/>
    </location>
</feature>
<keyword id="KW-1185">Reference proteome</keyword>
<keyword id="KW-0687">Ribonucleoprotein</keyword>
<keyword id="KW-0689">Ribosomal protein</keyword>
<keyword id="KW-0694">RNA-binding</keyword>
<keyword id="KW-0699">rRNA-binding</keyword>
<keyword id="KW-0820">tRNA-binding</keyword>
<sequence length="179" mass="19981">MARLQEFYKETVAPDLLKQFGYKSVMEVPRITKITLNMGVGEAVGDKKILEHAVGDMVKIAGQKPVVTKARKSIAGFKIRDGYPIGCMVTLRGAKMFEFLDRLVTVAMPRIRDFRGIGGKGFDGRGNYNLGVKEQIIFPEIEYDKIDALRGMNISITTTAKSDQEARALLVAFKFPFKN</sequence>
<protein>
    <recommendedName>
        <fullName evidence="1">Large ribosomal subunit protein uL5</fullName>
    </recommendedName>
    <alternativeName>
        <fullName evidence="2">50S ribosomal protein L5</fullName>
    </alternativeName>
</protein>
<proteinExistence type="inferred from homology"/>
<accession>Q5P320</accession>
<dbReference type="EMBL" id="CR555306">
    <property type="protein sequence ID" value="CAI08294.1"/>
    <property type="molecule type" value="Genomic_DNA"/>
</dbReference>
<dbReference type="RefSeq" id="WP_011237984.1">
    <property type="nucleotide sequence ID" value="NC_006513.1"/>
</dbReference>
<dbReference type="SMR" id="Q5P320"/>
<dbReference type="STRING" id="76114.ebA3839"/>
<dbReference type="KEGG" id="eba:ebA3839"/>
<dbReference type="eggNOG" id="COG0094">
    <property type="taxonomic scope" value="Bacteria"/>
</dbReference>
<dbReference type="HOGENOM" id="CLU_061015_2_1_4"/>
<dbReference type="OrthoDB" id="9806626at2"/>
<dbReference type="Proteomes" id="UP000006552">
    <property type="component" value="Chromosome"/>
</dbReference>
<dbReference type="GO" id="GO:1990904">
    <property type="term" value="C:ribonucleoprotein complex"/>
    <property type="evidence" value="ECO:0007669"/>
    <property type="project" value="UniProtKB-KW"/>
</dbReference>
<dbReference type="GO" id="GO:0005840">
    <property type="term" value="C:ribosome"/>
    <property type="evidence" value="ECO:0007669"/>
    <property type="project" value="UniProtKB-KW"/>
</dbReference>
<dbReference type="GO" id="GO:0019843">
    <property type="term" value="F:rRNA binding"/>
    <property type="evidence" value="ECO:0007669"/>
    <property type="project" value="UniProtKB-UniRule"/>
</dbReference>
<dbReference type="GO" id="GO:0003735">
    <property type="term" value="F:structural constituent of ribosome"/>
    <property type="evidence" value="ECO:0007669"/>
    <property type="project" value="InterPro"/>
</dbReference>
<dbReference type="GO" id="GO:0000049">
    <property type="term" value="F:tRNA binding"/>
    <property type="evidence" value="ECO:0007669"/>
    <property type="project" value="UniProtKB-UniRule"/>
</dbReference>
<dbReference type="GO" id="GO:0006412">
    <property type="term" value="P:translation"/>
    <property type="evidence" value="ECO:0007669"/>
    <property type="project" value="UniProtKB-UniRule"/>
</dbReference>
<dbReference type="FunFam" id="3.30.1440.10:FF:000001">
    <property type="entry name" value="50S ribosomal protein L5"/>
    <property type="match status" value="1"/>
</dbReference>
<dbReference type="Gene3D" id="3.30.1440.10">
    <property type="match status" value="1"/>
</dbReference>
<dbReference type="HAMAP" id="MF_01333_B">
    <property type="entry name" value="Ribosomal_uL5_B"/>
    <property type="match status" value="1"/>
</dbReference>
<dbReference type="InterPro" id="IPR002132">
    <property type="entry name" value="Ribosomal_uL5"/>
</dbReference>
<dbReference type="InterPro" id="IPR020930">
    <property type="entry name" value="Ribosomal_uL5_bac-type"/>
</dbReference>
<dbReference type="InterPro" id="IPR031309">
    <property type="entry name" value="Ribosomal_uL5_C"/>
</dbReference>
<dbReference type="InterPro" id="IPR020929">
    <property type="entry name" value="Ribosomal_uL5_CS"/>
</dbReference>
<dbReference type="InterPro" id="IPR022803">
    <property type="entry name" value="Ribosomal_uL5_dom_sf"/>
</dbReference>
<dbReference type="InterPro" id="IPR031310">
    <property type="entry name" value="Ribosomal_uL5_N"/>
</dbReference>
<dbReference type="NCBIfam" id="NF000585">
    <property type="entry name" value="PRK00010.1"/>
    <property type="match status" value="1"/>
</dbReference>
<dbReference type="PANTHER" id="PTHR11994">
    <property type="entry name" value="60S RIBOSOMAL PROTEIN L11-RELATED"/>
    <property type="match status" value="1"/>
</dbReference>
<dbReference type="Pfam" id="PF00281">
    <property type="entry name" value="Ribosomal_L5"/>
    <property type="match status" value="1"/>
</dbReference>
<dbReference type="Pfam" id="PF00673">
    <property type="entry name" value="Ribosomal_L5_C"/>
    <property type="match status" value="1"/>
</dbReference>
<dbReference type="PIRSF" id="PIRSF002161">
    <property type="entry name" value="Ribosomal_L5"/>
    <property type="match status" value="1"/>
</dbReference>
<dbReference type="SUPFAM" id="SSF55282">
    <property type="entry name" value="RL5-like"/>
    <property type="match status" value="1"/>
</dbReference>
<dbReference type="PROSITE" id="PS00358">
    <property type="entry name" value="RIBOSOMAL_L5"/>
    <property type="match status" value="1"/>
</dbReference>